<accession>P15577</accession>
<sequence>MRAHLLHCELAFSFGKYFYSTSFLNLLMINLMFSKLGAIFFLNLALYLLALALFFFFLFNVKVALLKSVSQIYYFNNIFFFKFFVLIFFLNLAGIPPLLGFFLKFLIFFFLFFKTNLAFILIFLGFNMATLFFYLSTVKSFVNRKQASVLNSFNFFIRAELSFLYFFNFFYFFLFFAFFFLDSTFLIFLNLFF</sequence>
<feature type="chain" id="PRO_0000117621" description="NADH-ubiquinone oxidoreductase chain 2">
    <location>
        <begin position="1"/>
        <end position="193"/>
    </location>
</feature>
<feature type="transmembrane region" description="Helical" evidence="2">
    <location>
        <begin position="18"/>
        <end position="38"/>
    </location>
</feature>
<feature type="transmembrane region" description="Helical" evidence="2">
    <location>
        <begin position="39"/>
        <end position="59"/>
    </location>
</feature>
<feature type="transmembrane region" description="Helical" evidence="2">
    <location>
        <begin position="83"/>
        <end position="103"/>
    </location>
</feature>
<feature type="transmembrane region" description="Helical" evidence="2">
    <location>
        <begin position="116"/>
        <end position="138"/>
    </location>
</feature>
<feature type="transmembrane region" description="Helical" evidence="2">
    <location>
        <begin position="161"/>
        <end position="181"/>
    </location>
</feature>
<protein>
    <recommendedName>
        <fullName>NADH-ubiquinone oxidoreductase chain 2</fullName>
        <ecNumber>7.1.1.2</ecNumber>
    </recommendedName>
    <alternativeName>
        <fullName>NADH dehydrogenase subunit 2</fullName>
    </alternativeName>
</protein>
<reference key="1">
    <citation type="journal article" date="1990" name="Nucleic Acids Res.">
        <title>Nucleotide sequence of the mitochondrial genome of Paramecium.</title>
        <authorList>
            <person name="Pritchard A.E."/>
            <person name="Seilhamer J.J."/>
            <person name="Mahalingam R."/>
            <person name="Sable C.L."/>
            <person name="Venuti S.E."/>
            <person name="Cummings D.J."/>
        </authorList>
    </citation>
    <scope>NUCLEOTIDE SEQUENCE [GENOMIC DNA]</scope>
    <source>
        <strain>Stock 51</strain>
    </source>
</reference>
<reference key="2">
    <citation type="journal article" date="1989" name="Gene">
        <title>An unusual region of Paramecium mitochondrial DNA containing chloroplast-like genes.</title>
        <authorList>
            <person name="Pritchard A.E."/>
            <person name="Venuti S.E."/>
            <person name="Ghalambor M.A."/>
            <person name="Sable C.L."/>
            <person name="Cummings D.J."/>
        </authorList>
    </citation>
    <scope>NUCLEOTIDE SEQUENCE [GENOMIC DNA]</scope>
    <source>
        <strain>Stock 51</strain>
    </source>
</reference>
<comment type="function">
    <text evidence="1">Core subunit of the mitochondrial membrane respiratory chain NADH dehydrogenase (Complex I) that is believed to belong to the minimal assembly required for catalysis. Complex I functions in the transfer of electrons from NADH to the respiratory chain. The immediate electron acceptor for the enzyme is believed to be ubiquinone (By similarity).</text>
</comment>
<comment type="catalytic activity">
    <reaction>
        <text>a ubiquinone + NADH + 5 H(+)(in) = a ubiquinol + NAD(+) + 4 H(+)(out)</text>
        <dbReference type="Rhea" id="RHEA:29091"/>
        <dbReference type="Rhea" id="RHEA-COMP:9565"/>
        <dbReference type="Rhea" id="RHEA-COMP:9566"/>
        <dbReference type="ChEBI" id="CHEBI:15378"/>
        <dbReference type="ChEBI" id="CHEBI:16389"/>
        <dbReference type="ChEBI" id="CHEBI:17976"/>
        <dbReference type="ChEBI" id="CHEBI:57540"/>
        <dbReference type="ChEBI" id="CHEBI:57945"/>
        <dbReference type="EC" id="7.1.1.2"/>
    </reaction>
</comment>
<comment type="subcellular location">
    <subcellularLocation>
        <location>Mitochondrion inner membrane</location>
        <topology>Multi-pass membrane protein</topology>
    </subcellularLocation>
</comment>
<comment type="caution">
    <text evidence="3">No similarity to other species complex I subunit 2.</text>
</comment>
<geneLocation type="mitochondrion"/>
<evidence type="ECO:0000250" key="1"/>
<evidence type="ECO:0000255" key="2"/>
<evidence type="ECO:0000305" key="3"/>
<gene>
    <name type="primary">ND2</name>
    <name type="synonym">NDH2</name>
</gene>
<organism>
    <name type="scientific">Paramecium tetraurelia</name>
    <dbReference type="NCBI Taxonomy" id="5888"/>
    <lineage>
        <taxon>Eukaryota</taxon>
        <taxon>Sar</taxon>
        <taxon>Alveolata</taxon>
        <taxon>Ciliophora</taxon>
        <taxon>Intramacronucleata</taxon>
        <taxon>Oligohymenophorea</taxon>
        <taxon>Peniculida</taxon>
        <taxon>Parameciidae</taxon>
        <taxon>Paramecium</taxon>
    </lineage>
</organism>
<dbReference type="EC" id="7.1.1.2"/>
<dbReference type="EMBL" id="M26930">
    <property type="protein sequence ID" value="AAA79255.1"/>
    <property type="molecule type" value="Genomic_DNA"/>
</dbReference>
<dbReference type="EMBL" id="X15917">
    <property type="protein sequence ID" value="CAA34043.1"/>
    <property type="molecule type" value="Genomic_DNA"/>
</dbReference>
<dbReference type="PIR" id="S07734">
    <property type="entry name" value="S07734"/>
</dbReference>
<dbReference type="SMR" id="P15577"/>
<dbReference type="GO" id="GO:0005743">
    <property type="term" value="C:mitochondrial inner membrane"/>
    <property type="evidence" value="ECO:0007669"/>
    <property type="project" value="UniProtKB-SubCell"/>
</dbReference>
<dbReference type="GO" id="GO:0008137">
    <property type="term" value="F:NADH dehydrogenase (ubiquinone) activity"/>
    <property type="evidence" value="ECO:0007669"/>
    <property type="project" value="UniProtKB-EC"/>
</dbReference>
<proteinExistence type="inferred from homology"/>
<name>NU2M_PARTE</name>
<keyword id="KW-0249">Electron transport</keyword>
<keyword id="KW-0472">Membrane</keyword>
<keyword id="KW-0496">Mitochondrion</keyword>
<keyword id="KW-0999">Mitochondrion inner membrane</keyword>
<keyword id="KW-0520">NAD</keyword>
<keyword id="KW-0679">Respiratory chain</keyword>
<keyword id="KW-1278">Translocase</keyword>
<keyword id="KW-0812">Transmembrane</keyword>
<keyword id="KW-1133">Transmembrane helix</keyword>
<keyword id="KW-0813">Transport</keyword>
<keyword id="KW-0830">Ubiquinone</keyword>